<proteinExistence type="evidence at protein level"/>
<dbReference type="SMR" id="A0A1B0GQX2"/>
<dbReference type="FunCoup" id="A0A1B0GQX2">
    <property type="interactions" value="4"/>
</dbReference>
<dbReference type="STRING" id="10090.ENSMUSP00000147361"/>
<dbReference type="Ensembl" id="ENSMUST00000180458.9">
    <property type="protein sequence ID" value="ENSMUSP00000147361.3"/>
    <property type="gene ID" value="ENSMUSG00000097929.10"/>
</dbReference>
<dbReference type="Ensembl" id="ENSMUST00000180503.3">
    <property type="protein sequence ID" value="ENSMUSP00000147289.3"/>
    <property type="gene ID" value="ENSMUSG00000097929.10"/>
</dbReference>
<dbReference type="AGR" id="MGI:1917202"/>
<dbReference type="MGI" id="MGI:1917202">
    <property type="gene designation" value="Tunar"/>
</dbReference>
<dbReference type="VEuPathDB" id="HostDB:ENSMUSG00000097929"/>
<dbReference type="GeneTree" id="ENSGT01110000267272"/>
<dbReference type="InParanoid" id="A0A1B0GQX2"/>
<dbReference type="ChiTaRS" id="Tunar">
    <property type="organism name" value="mouse"/>
</dbReference>
<dbReference type="PRO" id="PR:A0A1B0GQX2"/>
<dbReference type="Proteomes" id="UP000000589">
    <property type="component" value="Chromosome 12"/>
</dbReference>
<dbReference type="Bgee" id="ENSMUSG00000097929">
    <property type="expression patterns" value="Expressed in lumbar subsegment of spinal cord and 76 other cell types or tissues"/>
</dbReference>
<dbReference type="GO" id="GO:0005783">
    <property type="term" value="C:endoplasmic reticulum"/>
    <property type="evidence" value="ECO:0000314"/>
    <property type="project" value="UniProtKB"/>
</dbReference>
<dbReference type="GO" id="GO:0005789">
    <property type="term" value="C:endoplasmic reticulum membrane"/>
    <property type="evidence" value="ECO:0007669"/>
    <property type="project" value="UniProtKB-SubCell"/>
</dbReference>
<dbReference type="GO" id="GO:0051117">
    <property type="term" value="F:ATPase binding"/>
    <property type="evidence" value="ECO:0000353"/>
    <property type="project" value="UniProtKB"/>
</dbReference>
<dbReference type="GO" id="GO:0032469">
    <property type="term" value="P:endoplasmic reticulum calcium ion homeostasis"/>
    <property type="evidence" value="ECO:0000250"/>
    <property type="project" value="UniProtKB"/>
</dbReference>
<dbReference type="GO" id="GO:0045665">
    <property type="term" value="P:negative regulation of neuron differentiation"/>
    <property type="evidence" value="ECO:0000315"/>
    <property type="project" value="UniProtKB"/>
</dbReference>
<dbReference type="GO" id="GO:0048812">
    <property type="term" value="P:neuron projection morphogenesis"/>
    <property type="evidence" value="ECO:0000315"/>
    <property type="project" value="UniProtKB"/>
</dbReference>
<dbReference type="GO" id="GO:0035774">
    <property type="term" value="P:positive regulation of insulin secretion involved in cellular response to glucose stimulus"/>
    <property type="evidence" value="ECO:0000250"/>
    <property type="project" value="UniProtKB"/>
</dbReference>
<dbReference type="GO" id="GO:0051480">
    <property type="term" value="P:regulation of cytosolic calcium ion concentration"/>
    <property type="evidence" value="ECO:0000315"/>
    <property type="project" value="UniProtKB"/>
</dbReference>
<dbReference type="InterPro" id="IPR054138">
    <property type="entry name" value="TUNAR"/>
</dbReference>
<dbReference type="Pfam" id="PF21954">
    <property type="entry name" value="TUNAR"/>
    <property type="match status" value="1"/>
</dbReference>
<sequence length="48" mass="5288">MVITSGNDEDRGGQEKESKEESVLAMLGIIGTILNLIVIIFVYIYTTL</sequence>
<comment type="function">
    <text evidence="1 4">In neurons, plays a role in the regulation of intracellular Ca(2+), possibly by acting as an activator of ATP2A2/SERCA2, thus increasing the efficiency with which Ca(2+) is removed from the cytoplasm (PubMed:35036403). Inhibits differentiation of embryonic stem cells into neurons and inhibits neurite outgrowth, likely as a result of its role in intracellular Ca(2+) regulation (PubMed:35036403). In pancreatic beta cells, lowers Ca(2+) levels in the endoplasmic reticulum and enhances glucose-stimulated insulin secretion (By similarity).</text>
</comment>
<comment type="subunit">
    <text evidence="1 4">Interacts with ATPase ATP2A2/SERCA2 (PubMed:35036403). Interacts with ATPase ATP2A3/SERCA3; the interaction occurs at low levels in low glucose conditions and is increased by high glucose levels (By similarity).</text>
</comment>
<comment type="subcellular location">
    <subcellularLocation>
        <location evidence="4">Endoplasmic reticulum membrane</location>
        <topology evidence="2">Single-pass membrane protein</topology>
    </subcellularLocation>
    <subcellularLocation>
        <location evidence="4">Extracellular vesicle membrane</location>
        <topology evidence="2">Single-pass membrane protein</topology>
    </subcellularLocation>
</comment>
<comment type="tissue specificity">
    <text evidence="4">In the adult, expressed in Purkinje cells in the cerebellum, in motor neurons and interneurons in the spinal cord and in neurons of the cortex, hippocampus and thalamus (at protein level) (PubMed:35036403). Also detected in the developing cortex, hippocampus and thalamus at embryonic day E15.5 (at protein level) (PubMed:35036403).</text>
</comment>
<protein>
    <recommendedName>
        <fullName evidence="6">Protein TUNAR</fullName>
        <shortName evidence="5">pTUNAR</shortName>
    </recommendedName>
    <alternativeName>
        <fullName evidence="1">Beta cell and neural cell-regulin</fullName>
        <shortName evidence="1">BNLN</shortName>
    </alternativeName>
    <alternativeName>
        <fullName evidence="7">Tcl1 upstream neural differentiation-associated RNA</fullName>
    </alternativeName>
</protein>
<keyword id="KW-0256">Endoplasmic reticulum</keyword>
<keyword id="KW-0472">Membrane</keyword>
<keyword id="KW-1185">Reference proteome</keyword>
<keyword id="KW-0812">Transmembrane</keyword>
<keyword id="KW-1133">Transmembrane helix</keyword>
<name>TUNAR_MOUSE</name>
<accession>A0A1B0GQX2</accession>
<gene>
    <name evidence="7" type="primary">Tunar</name>
</gene>
<organism evidence="8">
    <name type="scientific">Mus musculus</name>
    <name type="common">Mouse</name>
    <dbReference type="NCBI Taxonomy" id="10090"/>
    <lineage>
        <taxon>Eukaryota</taxon>
        <taxon>Metazoa</taxon>
        <taxon>Chordata</taxon>
        <taxon>Craniata</taxon>
        <taxon>Vertebrata</taxon>
        <taxon>Euteleostomi</taxon>
        <taxon>Mammalia</taxon>
        <taxon>Eutheria</taxon>
        <taxon>Euarchontoglires</taxon>
        <taxon>Glires</taxon>
        <taxon>Rodentia</taxon>
        <taxon>Myomorpha</taxon>
        <taxon>Muroidea</taxon>
        <taxon>Muridae</taxon>
        <taxon>Murinae</taxon>
        <taxon>Mus</taxon>
        <taxon>Mus</taxon>
    </lineage>
</organism>
<feature type="chain" id="PRO_0000455682" description="Protein TUNAR">
    <location>
        <begin position="1"/>
        <end position="48"/>
    </location>
</feature>
<feature type="transmembrane region" description="Helical" evidence="2">
    <location>
        <begin position="24"/>
        <end position="44"/>
    </location>
</feature>
<feature type="region of interest" description="Disordered" evidence="3">
    <location>
        <begin position="1"/>
        <end position="20"/>
    </location>
</feature>
<feature type="compositionally biased region" description="Basic and acidic residues" evidence="3">
    <location>
        <begin position="8"/>
        <end position="20"/>
    </location>
</feature>
<evidence type="ECO:0000250" key="1">
    <source>
        <dbReference type="UniProtKB" id="A0A1B0GTB2"/>
    </source>
</evidence>
<evidence type="ECO:0000255" key="2"/>
<evidence type="ECO:0000256" key="3">
    <source>
        <dbReference type="SAM" id="MobiDB-lite"/>
    </source>
</evidence>
<evidence type="ECO:0000269" key="4">
    <source>
    </source>
</evidence>
<evidence type="ECO:0000303" key="5">
    <source>
    </source>
</evidence>
<evidence type="ECO:0000305" key="6"/>
<evidence type="ECO:0000312" key="7">
    <source>
        <dbReference type="MGI" id="MGI:1917202"/>
    </source>
</evidence>
<evidence type="ECO:0000312" key="8">
    <source>
        <dbReference type="Proteomes" id="UP000000589"/>
    </source>
</evidence>
<reference evidence="8" key="1">
    <citation type="journal article" date="2009" name="PLoS Biol.">
        <title>Lineage-specific biology revealed by a finished genome assembly of the mouse.</title>
        <authorList>
            <person name="Church D.M."/>
            <person name="Goodstadt L."/>
            <person name="Hillier L.W."/>
            <person name="Zody M.C."/>
            <person name="Goldstein S."/>
            <person name="She X."/>
            <person name="Bult C.J."/>
            <person name="Agarwala R."/>
            <person name="Cherry J.L."/>
            <person name="DiCuccio M."/>
            <person name="Hlavina W."/>
            <person name="Kapustin Y."/>
            <person name="Meric P."/>
            <person name="Maglott D."/>
            <person name="Birtle Z."/>
            <person name="Marques A.C."/>
            <person name="Graves T."/>
            <person name="Zhou S."/>
            <person name="Teague B."/>
            <person name="Potamousis K."/>
            <person name="Churas C."/>
            <person name="Place M."/>
            <person name="Herschleb J."/>
            <person name="Runnheim R."/>
            <person name="Forrest D."/>
            <person name="Amos-Landgraf J."/>
            <person name="Schwartz D.C."/>
            <person name="Cheng Z."/>
            <person name="Lindblad-Toh K."/>
            <person name="Eichler E.E."/>
            <person name="Ponting C.P."/>
        </authorList>
    </citation>
    <scope>NUCLEOTIDE SEQUENCE [LARGE SCALE GENOMIC DNA]</scope>
    <source>
        <strain evidence="8">C57BL/6J</strain>
    </source>
</reference>
<reference evidence="6" key="2">
    <citation type="journal article" date="2021" name="Front. Cell Dev. Biol.">
        <title>TUNAR lncRNA Encodes a Microprotein that Regulates Neural Differentiation and Neurite Formation by Modulating Calcium Dynamics.</title>
        <authorList>
            <person name="Senis E."/>
            <person name="Esgleas M."/>
            <person name="Najas S."/>
            <person name="Jimenez-Sabado V."/>
            <person name="Bertani C."/>
            <person name="Gimenez-Alejandre M."/>
            <person name="Escriche A."/>
            <person name="Ruiz-Orera J."/>
            <person name="Hergueta-Redondo M."/>
            <person name="Jimenez M."/>
            <person name="Giralt A."/>
            <person name="Nuciforo P."/>
            <person name="Alba M.M."/>
            <person name="Peinado H."/>
            <person name="Del Toro D."/>
            <person name="Hove-Madsen L."/>
            <person name="Goetz M."/>
            <person name="Abad M."/>
        </authorList>
    </citation>
    <scope>FUNCTION</scope>
    <scope>INTERACTION WITH ATP2A2</scope>
    <scope>SUBCELLULAR LOCATION</scope>
    <scope>TISSUE SPECIFICITY</scope>
</reference>